<keyword id="KW-0002">3D-structure</keyword>
<keyword id="KW-1185">Reference proteome</keyword>
<keyword id="KW-0678">Repressor</keyword>
<keyword id="KW-0687">Ribonucleoprotein</keyword>
<keyword id="KW-0689">Ribosomal protein</keyword>
<keyword id="KW-0694">RNA-binding</keyword>
<keyword id="KW-0699">rRNA-binding</keyword>
<keyword id="KW-0810">Translation regulation</keyword>
<keyword id="KW-0820">tRNA-binding</keyword>
<organism>
    <name type="scientific">Sulfolobus acidocaldarius (strain ATCC 33909 / DSM 639 / JCM 8929 / NBRC 15157 / NCIMB 11770)</name>
    <dbReference type="NCBI Taxonomy" id="330779"/>
    <lineage>
        <taxon>Archaea</taxon>
        <taxon>Thermoproteota</taxon>
        <taxon>Thermoprotei</taxon>
        <taxon>Sulfolobales</taxon>
        <taxon>Sulfolobaceae</taxon>
        <taxon>Sulfolobus</taxon>
    </lineage>
</organism>
<comment type="function">
    <text evidence="1">Probably involved in E site tRNA release (By similarity). Binds directly to 23S rRNA.</text>
</comment>
<comment type="function">
    <text evidence="2">Protein L1 is also a translational repressor protein, it controls the translation of its operon by binding to its mRNA.</text>
</comment>
<comment type="subunit">
    <text evidence="2 3">Part of the 50S ribosomal subunit.</text>
</comment>
<comment type="similarity">
    <text evidence="2">Belongs to the universal ribosomal protein uL1 family.</text>
</comment>
<comment type="caution">
    <text evidence="5">Was originally thought to originate from S.solfataricus strain P1, but the culture was contaminated with S.acidocaldarius.</text>
</comment>
<comment type="sequence caution" evidence="4">
    <conflict type="erroneous initiation">
        <sequence resource="EMBL-CDS" id="AAY80779"/>
    </conflict>
</comment>
<sequence length="221" mass="24935">MKKVLADKESLIEALKLALSTEYNVKRNFTQSVEIILTFKGIDMKKGDLKLREIVPLPKQPSKAKRVLVVPSFEQLEYAKKASPNVVITREELQKLQGQKRPVKKLARQNEWFLINQESMALAGRILGPALGPRGKFPTPLPNTADISEYINRFKRSVLVKTKDQPQVQVFIGTEDMKPEDLAENAIAVLNAIENKAKVETNLRNIYVKTTMGKAVKVKRA</sequence>
<protein>
    <recommendedName>
        <fullName evidence="2">Large ribosomal subunit protein uL1</fullName>
    </recommendedName>
    <alternativeName>
        <fullName evidence="4">50S ribosomal protein L1</fullName>
    </alternativeName>
</protein>
<gene>
    <name evidence="2" type="primary">rpl1</name>
    <name type="ordered locus">Saci_1458</name>
</gene>
<proteinExistence type="evidence at protein level"/>
<accession>P35024</accession>
<accession>Q4J8V1</accession>
<feature type="chain" id="PRO_0000125812" description="Large ribosomal subunit protein uL1">
    <location>
        <begin position="1"/>
        <end position="221"/>
    </location>
</feature>
<feature type="sequence conflict" description="In Ref. 1; CAA41763 and 2." evidence="4" ref="1 2">
    <original>F</original>
    <variation>S</variation>
    <location>
        <position position="73"/>
    </location>
</feature>
<feature type="sequence conflict" description="In Ref. 1; CAA41763 and 2." evidence="4" ref="1 2">
    <original>N</original>
    <variation>K</variation>
    <location>
        <position position="85"/>
    </location>
</feature>
<feature type="sequence conflict" description="In Ref. 1; CAA41763 and 2." evidence="4" ref="1 2">
    <original>R</original>
    <variation>I</variation>
    <location>
        <position position="108"/>
    </location>
</feature>
<feature type="sequence conflict" description="In Ref. 1; CAA41763 and 2." evidence="4" ref="1 2">
    <original>L</original>
    <variation>I</variation>
    <location>
        <position position="159"/>
    </location>
</feature>
<feature type="helix" evidence="6">
    <location>
        <begin position="8"/>
        <end position="19"/>
    </location>
</feature>
<feature type="turn" evidence="6">
    <location>
        <begin position="21"/>
        <end position="23"/>
    </location>
</feature>
<feature type="strand" evidence="6">
    <location>
        <begin position="32"/>
        <end position="41"/>
    </location>
</feature>
<feature type="helix" evidence="6">
    <location>
        <begin position="44"/>
        <end position="46"/>
    </location>
</feature>
<feature type="turn" evidence="6">
    <location>
        <begin position="47"/>
        <end position="49"/>
    </location>
</feature>
<feature type="strand" evidence="6">
    <location>
        <begin position="52"/>
        <end position="56"/>
    </location>
</feature>
<feature type="strand" evidence="6">
    <location>
        <begin position="67"/>
        <end position="70"/>
    </location>
</feature>
<feature type="helix" evidence="6">
    <location>
        <begin position="73"/>
        <end position="81"/>
    </location>
</feature>
<feature type="strand" evidence="6">
    <location>
        <begin position="85"/>
        <end position="87"/>
    </location>
</feature>
<feature type="helix" evidence="6">
    <location>
        <begin position="90"/>
        <end position="96"/>
    </location>
</feature>
<feature type="helix" evidence="6">
    <location>
        <begin position="100"/>
        <end position="108"/>
    </location>
</feature>
<feature type="strand" evidence="6">
    <location>
        <begin position="111"/>
        <end position="115"/>
    </location>
</feature>
<feature type="helix" evidence="6">
    <location>
        <begin position="117"/>
        <end position="119"/>
    </location>
</feature>
<feature type="helix" evidence="6">
    <location>
        <begin position="120"/>
        <end position="126"/>
    </location>
</feature>
<feature type="helix" evidence="6">
    <location>
        <begin position="128"/>
        <end position="131"/>
    </location>
</feature>
<feature type="helix" evidence="6">
    <location>
        <begin position="132"/>
        <end position="134"/>
    </location>
</feature>
<feature type="strand" evidence="6">
    <location>
        <begin position="138"/>
        <end position="140"/>
    </location>
</feature>
<feature type="strand" evidence="6">
    <location>
        <begin position="143"/>
        <end position="145"/>
    </location>
</feature>
<feature type="helix" evidence="6">
    <location>
        <begin position="148"/>
        <end position="155"/>
    </location>
</feature>
<feature type="strand" evidence="6">
    <location>
        <begin position="157"/>
        <end position="161"/>
    </location>
</feature>
<feature type="strand" evidence="6">
    <location>
        <begin position="163"/>
        <end position="174"/>
    </location>
</feature>
<feature type="helix" evidence="6">
    <location>
        <begin position="179"/>
        <end position="196"/>
    </location>
</feature>
<feature type="turn" evidence="6">
    <location>
        <begin position="200"/>
        <end position="202"/>
    </location>
</feature>
<feature type="strand" evidence="6">
    <location>
        <begin position="203"/>
        <end position="210"/>
    </location>
</feature>
<dbReference type="EMBL" id="X59038">
    <property type="protein sequence ID" value="CAA41763.1"/>
    <property type="molecule type" value="Genomic_DNA"/>
</dbReference>
<dbReference type="EMBL" id="CP000077">
    <property type="protein sequence ID" value="AAY80779.1"/>
    <property type="status" value="ALT_INIT"/>
    <property type="molecule type" value="Genomic_DNA"/>
</dbReference>
<dbReference type="PIR" id="S53649">
    <property type="entry name" value="S53649"/>
</dbReference>
<dbReference type="RefSeq" id="WP_011278281.1">
    <property type="nucleotide sequence ID" value="NC_007181.1"/>
</dbReference>
<dbReference type="PDB" id="1MZP">
    <property type="method" value="X-ray"/>
    <property type="resolution" value="2.65 A"/>
    <property type="chains" value="A=5-220"/>
</dbReference>
<dbReference type="PDB" id="4V49">
    <property type="method" value="X-ray"/>
    <property type="resolution" value="8.70 A"/>
    <property type="chains" value="5=5-220"/>
</dbReference>
<dbReference type="PDB" id="4V4A">
    <property type="method" value="X-ray"/>
    <property type="resolution" value="9.50 A"/>
    <property type="chains" value="5=5-220"/>
</dbReference>
<dbReference type="PDB" id="4V4G">
    <property type="method" value="X-ray"/>
    <property type="resolution" value="11.50 A"/>
    <property type="chains" value="7=5-220"/>
</dbReference>
<dbReference type="PDB" id="8HKU">
    <property type="method" value="EM"/>
    <property type="resolution" value="2.72 A"/>
    <property type="chains" value="AL1P=5-220"/>
</dbReference>
<dbReference type="PDB" id="8HKY">
    <property type="method" value="EM"/>
    <property type="resolution" value="4.45 A"/>
    <property type="chains" value="AL1P=5-220"/>
</dbReference>
<dbReference type="PDB" id="8HKZ">
    <property type="method" value="EM"/>
    <property type="resolution" value="4.78 A"/>
    <property type="chains" value="AL1P=5-220"/>
</dbReference>
<dbReference type="PDB" id="8HL1">
    <property type="method" value="EM"/>
    <property type="resolution" value="3.93 A"/>
    <property type="chains" value="AL1P=5-220"/>
</dbReference>
<dbReference type="PDB" id="8HL2">
    <property type="method" value="EM"/>
    <property type="resolution" value="4.10 A"/>
    <property type="chains" value="AL1P=5-220"/>
</dbReference>
<dbReference type="PDB" id="8HL3">
    <property type="method" value="EM"/>
    <property type="resolution" value="4.80 A"/>
    <property type="chains" value="AL1P=5-220"/>
</dbReference>
<dbReference type="PDB" id="8HL4">
    <property type="method" value="EM"/>
    <property type="resolution" value="4.62 A"/>
    <property type="chains" value="AL1P=5-220"/>
</dbReference>
<dbReference type="PDB" id="8HL5">
    <property type="method" value="EM"/>
    <property type="resolution" value="5.72 A"/>
    <property type="chains" value="AL1P=5-220"/>
</dbReference>
<dbReference type="PDBsum" id="1MZP"/>
<dbReference type="PDBsum" id="4V49"/>
<dbReference type="PDBsum" id="4V4A"/>
<dbReference type="PDBsum" id="4V4G"/>
<dbReference type="PDBsum" id="8HKU"/>
<dbReference type="PDBsum" id="8HKY"/>
<dbReference type="PDBsum" id="8HKZ"/>
<dbReference type="PDBsum" id="8HL1"/>
<dbReference type="PDBsum" id="8HL2"/>
<dbReference type="PDBsum" id="8HL3"/>
<dbReference type="PDBsum" id="8HL4"/>
<dbReference type="PDBsum" id="8HL5"/>
<dbReference type="EMDB" id="EMD-34860"/>
<dbReference type="EMDB" id="EMD-34863"/>
<dbReference type="EMDB" id="EMD-34864"/>
<dbReference type="EMDB" id="EMD-34866"/>
<dbReference type="EMDB" id="EMD-34867"/>
<dbReference type="EMDB" id="EMD-34868"/>
<dbReference type="EMDB" id="EMD-34869"/>
<dbReference type="EMDB" id="EMD-34870"/>
<dbReference type="SMR" id="P35024"/>
<dbReference type="STRING" id="330779.Saci_1458"/>
<dbReference type="GeneID" id="14551953"/>
<dbReference type="KEGG" id="sai:Saci_1458"/>
<dbReference type="PATRIC" id="fig|330779.12.peg.1402"/>
<dbReference type="eggNOG" id="arCOG04289">
    <property type="taxonomic scope" value="Archaea"/>
</dbReference>
<dbReference type="HOGENOM" id="CLU_062853_4_0_2"/>
<dbReference type="EvolutionaryTrace" id="P35024"/>
<dbReference type="Proteomes" id="UP000001018">
    <property type="component" value="Chromosome"/>
</dbReference>
<dbReference type="GO" id="GO:0015934">
    <property type="term" value="C:large ribosomal subunit"/>
    <property type="evidence" value="ECO:0007669"/>
    <property type="project" value="InterPro"/>
</dbReference>
<dbReference type="GO" id="GO:0019843">
    <property type="term" value="F:rRNA binding"/>
    <property type="evidence" value="ECO:0007669"/>
    <property type="project" value="UniProtKB-UniRule"/>
</dbReference>
<dbReference type="GO" id="GO:0003735">
    <property type="term" value="F:structural constituent of ribosome"/>
    <property type="evidence" value="ECO:0007669"/>
    <property type="project" value="InterPro"/>
</dbReference>
<dbReference type="GO" id="GO:0000049">
    <property type="term" value="F:tRNA binding"/>
    <property type="evidence" value="ECO:0007669"/>
    <property type="project" value="UniProtKB-KW"/>
</dbReference>
<dbReference type="GO" id="GO:0006417">
    <property type="term" value="P:regulation of translation"/>
    <property type="evidence" value="ECO:0007669"/>
    <property type="project" value="UniProtKB-KW"/>
</dbReference>
<dbReference type="GO" id="GO:0006412">
    <property type="term" value="P:translation"/>
    <property type="evidence" value="ECO:0007669"/>
    <property type="project" value="UniProtKB-UniRule"/>
</dbReference>
<dbReference type="CDD" id="cd00403">
    <property type="entry name" value="Ribosomal_L1"/>
    <property type="match status" value="1"/>
</dbReference>
<dbReference type="FunFam" id="3.40.50.790:FF:000005">
    <property type="entry name" value="50S ribosomal protein L1"/>
    <property type="match status" value="1"/>
</dbReference>
<dbReference type="Gene3D" id="3.30.190.20">
    <property type="match status" value="1"/>
</dbReference>
<dbReference type="Gene3D" id="3.40.50.790">
    <property type="match status" value="1"/>
</dbReference>
<dbReference type="HAMAP" id="MF_01318_A">
    <property type="entry name" value="Ribosomal_uL1_A"/>
    <property type="match status" value="1"/>
</dbReference>
<dbReference type="InterPro" id="IPR002143">
    <property type="entry name" value="Ribosomal_uL1"/>
</dbReference>
<dbReference type="InterPro" id="IPR023674">
    <property type="entry name" value="Ribosomal_uL1-like"/>
</dbReference>
<dbReference type="InterPro" id="IPR028364">
    <property type="entry name" value="Ribosomal_uL1/biogenesis"/>
</dbReference>
<dbReference type="InterPro" id="IPR016095">
    <property type="entry name" value="Ribosomal_uL1_3-a/b-sand"/>
</dbReference>
<dbReference type="InterPro" id="IPR023669">
    <property type="entry name" value="Ribosomal_uL1_arc"/>
</dbReference>
<dbReference type="InterPro" id="IPR023673">
    <property type="entry name" value="Ribosomal_uL1_CS"/>
</dbReference>
<dbReference type="NCBIfam" id="NF003244">
    <property type="entry name" value="PRK04203.1"/>
    <property type="match status" value="1"/>
</dbReference>
<dbReference type="PANTHER" id="PTHR36427">
    <property type="entry name" value="54S RIBOSOMAL PROTEIN L1, MITOCHONDRIAL"/>
    <property type="match status" value="1"/>
</dbReference>
<dbReference type="PANTHER" id="PTHR36427:SF3">
    <property type="entry name" value="LARGE RIBOSOMAL SUBUNIT PROTEIN UL1M"/>
    <property type="match status" value="1"/>
</dbReference>
<dbReference type="Pfam" id="PF00687">
    <property type="entry name" value="Ribosomal_L1"/>
    <property type="match status" value="1"/>
</dbReference>
<dbReference type="PIRSF" id="PIRSF002155">
    <property type="entry name" value="Ribosomal_L1"/>
    <property type="match status" value="1"/>
</dbReference>
<dbReference type="SUPFAM" id="SSF56808">
    <property type="entry name" value="Ribosomal protein L1"/>
    <property type="match status" value="1"/>
</dbReference>
<dbReference type="PROSITE" id="PS01199">
    <property type="entry name" value="RIBOSOMAL_L1"/>
    <property type="match status" value="1"/>
</dbReference>
<name>RL1_SULAC</name>
<reference key="1">
    <citation type="journal article" date="1994" name="J. Mol. Biol.">
        <title>Structure and transcription of the L11-L1-L10-L12 ribosomal protein gene operon from the extreme thermophilic archaeon Sulfolobus acidocaldarius.</title>
        <authorList>
            <person name="Ramirez C."/>
            <person name="Shimmin L.C."/>
            <person name="Leggatt P."/>
            <person name="Matheson A.T."/>
        </authorList>
    </citation>
    <scope>NUCLEOTIDE SEQUENCE [GENOMIC DNA]</scope>
</reference>
<reference key="2">
    <citation type="journal article" date="1989" name="Can. J. Microbiol.">
        <title>Structure and evolution of the L11, L1, L10, and L12 equivalent ribosomal proteins in eubacteria, archaebacteria, and eucaryotes.</title>
        <authorList>
            <person name="Ramirez C."/>
            <person name="Shimmin L.C."/>
            <person name="Newton C.H."/>
            <person name="Matheson A.T."/>
            <person name="Dennis P.P."/>
        </authorList>
    </citation>
    <scope>NUCLEOTIDE SEQUENCE [GENOMIC DNA]</scope>
</reference>
<reference key="3">
    <citation type="journal article" date="1989" name="Can. J. Microbiol.">
        <authorList>
            <person name="Ramirez C."/>
            <person name="Shimmin L.C."/>
            <person name="Newton C.H."/>
            <person name="Matheson A.T."/>
            <person name="Dennis P.P."/>
        </authorList>
    </citation>
    <scope>ERRATUM OF PUBMED:2497941</scope>
</reference>
<reference key="4">
    <citation type="journal article" date="2005" name="J. Bacteriol.">
        <title>The genome of Sulfolobus acidocaldarius, a model organism of the Crenarchaeota.</title>
        <authorList>
            <person name="Chen L."/>
            <person name="Bruegger K."/>
            <person name="Skovgaard M."/>
            <person name="Redder P."/>
            <person name="She Q."/>
            <person name="Torarinsson E."/>
            <person name="Greve B."/>
            <person name="Awayez M."/>
            <person name="Zibat A."/>
            <person name="Klenk H.-P."/>
            <person name="Garrett R.A."/>
        </authorList>
    </citation>
    <scope>NUCLEOTIDE SEQUENCE [LARGE SCALE GENOMIC DNA]</scope>
    <source>
        <strain>ATCC 33909 / DSM 639 / JCM 8929 / NBRC 15157 / NCIMB 11770</strain>
    </source>
</reference>
<reference key="5">
    <citation type="journal article" date="2003" name="Nat. Struct. Biol.">
        <title>Structure of the L1 protuberance in the ribosome.</title>
        <authorList>
            <person name="Nikulin A."/>
            <person name="Eliseikina I."/>
            <person name="Tishchenko S."/>
            <person name="Nevskaya N."/>
            <person name="Davydova N."/>
            <person name="Platonova O."/>
            <person name="Piendl W."/>
            <person name="Selmer M."/>
            <person name="Liljas A."/>
            <person name="Drygin D."/>
            <person name="Zimmermann R."/>
            <person name="Garber M.B."/>
            <person name="Nikonov S."/>
        </authorList>
    </citation>
    <scope>X-RAY CRYSTALLOGRAPHY (2.65 ANGSTROMS) OF 5-220 IN COMPLEX WITH A T.THERMOPHILUS RRNA FRAGMENT</scope>
</reference>
<evidence type="ECO:0000250" key="1"/>
<evidence type="ECO:0000255" key="2">
    <source>
        <dbReference type="HAMAP-Rule" id="MF_01318"/>
    </source>
</evidence>
<evidence type="ECO:0000269" key="3">
    <source>
    </source>
</evidence>
<evidence type="ECO:0000305" key="4"/>
<evidence type="ECO:0000305" key="5">
    <source>
    </source>
</evidence>
<evidence type="ECO:0007829" key="6">
    <source>
        <dbReference type="PDB" id="1MZP"/>
    </source>
</evidence>